<feature type="chain" id="PRO_0000358710" description="NADH-quinone oxidoreductase subunit C/D">
    <location>
        <begin position="1"/>
        <end position="598"/>
    </location>
</feature>
<feature type="region of interest" description="NADH dehydrogenase I subunit C" evidence="1">
    <location>
        <begin position="1"/>
        <end position="189"/>
    </location>
</feature>
<feature type="region of interest" description="NADH dehydrogenase I subunit D" evidence="1">
    <location>
        <begin position="213"/>
        <end position="598"/>
    </location>
</feature>
<proteinExistence type="inferred from homology"/>
<accession>Q669A2</accession>
<reference key="1">
    <citation type="journal article" date="2004" name="Proc. Natl. Acad. Sci. U.S.A.">
        <title>Insights into the evolution of Yersinia pestis through whole-genome comparison with Yersinia pseudotuberculosis.</title>
        <authorList>
            <person name="Chain P.S.G."/>
            <person name="Carniel E."/>
            <person name="Larimer F.W."/>
            <person name="Lamerdin J."/>
            <person name="Stoutland P.O."/>
            <person name="Regala W.M."/>
            <person name="Georgescu A.M."/>
            <person name="Vergez L.M."/>
            <person name="Land M.L."/>
            <person name="Motin V.L."/>
            <person name="Brubaker R.R."/>
            <person name="Fowler J."/>
            <person name="Hinnebusch J."/>
            <person name="Marceau M."/>
            <person name="Medigue C."/>
            <person name="Simonet M."/>
            <person name="Chenal-Francisque V."/>
            <person name="Souza B."/>
            <person name="Dacheux D."/>
            <person name="Elliott J.M."/>
            <person name="Derbise A."/>
            <person name="Hauser L.J."/>
            <person name="Garcia E."/>
        </authorList>
    </citation>
    <scope>NUCLEOTIDE SEQUENCE [LARGE SCALE GENOMIC DNA]</scope>
    <source>
        <strain>IP32953</strain>
    </source>
</reference>
<protein>
    <recommendedName>
        <fullName evidence="1">NADH-quinone oxidoreductase subunit C/D</fullName>
        <ecNumber evidence="1">7.1.1.-</ecNumber>
    </recommendedName>
    <alternativeName>
        <fullName evidence="1">NADH dehydrogenase I subunit C/D</fullName>
    </alternativeName>
    <alternativeName>
        <fullName evidence="1">NDH-1 subunit C/D</fullName>
    </alternativeName>
</protein>
<sequence length="598" mass="68886">MTDLTTSDSLQPAWQTRDHLDDPVIGELSNRFGPEAFVVQATRTGMPVVWVKREQLLEVMSFLRKQPKPYVMLFDLHGVDERLRTHRQGLPDADFSVFYHLLSIERNRDIMLKVALSEKDLHVSTATKIFPNANWYERETWEMFGITFDGHPHLTRIMMPQSWEGHPLRKDYPARATEFDPYVLTKQKEDLEMESLTFKPEDWGMKRGTENEDFMFLNLGPNHPSSHGAFRIVLQLDGEEIIDCVPDVGYHHRGAEKMGERQSWHSYIPYTDRIEYLGGCVNEMPYVLAVEKLAGIVVPDRVNTIRVMLSELFRINSHLLYISTFIQDVGAMTPVFFAFTDRQKVYDVIEAITGFRMHPAWFRIGGVAHDLPRGWERLLRDFLDWMPKRLDSYVKAALQNSILKGRSVGVAAYNAKEALEWGVTGAGLRATGVEFDVRKWRPYSGYENFDFEVPVGNNGDCYDRVMLKVEELRQSLRILEQCYKNMPEGPFKADHPLTTPPPKERTLQHIETLITHFLQVSWGPVMPANESFQMIEATKGINSYYLTSDGSTMSYRTRIRTPSYAHLQQIPSVIRGSLVSDLIVYLGSIDFVMSDVDR</sequence>
<dbReference type="EC" id="7.1.1.-" evidence="1"/>
<dbReference type="EMBL" id="BX936398">
    <property type="protein sequence ID" value="CAH21823.1"/>
    <property type="molecule type" value="Genomic_DNA"/>
</dbReference>
<dbReference type="RefSeq" id="WP_002210277.1">
    <property type="nucleotide sequence ID" value="NZ_CP009712.1"/>
</dbReference>
<dbReference type="SMR" id="Q669A2"/>
<dbReference type="GeneID" id="57976136"/>
<dbReference type="KEGG" id="ypo:BZ17_4053"/>
<dbReference type="KEGG" id="yps:YPTB2585"/>
<dbReference type="PATRIC" id="fig|273123.14.peg.4258"/>
<dbReference type="Proteomes" id="UP000001011">
    <property type="component" value="Chromosome"/>
</dbReference>
<dbReference type="GO" id="GO:0030964">
    <property type="term" value="C:NADH dehydrogenase complex"/>
    <property type="evidence" value="ECO:0007669"/>
    <property type="project" value="InterPro"/>
</dbReference>
<dbReference type="GO" id="GO:0005886">
    <property type="term" value="C:plasma membrane"/>
    <property type="evidence" value="ECO:0007669"/>
    <property type="project" value="UniProtKB-SubCell"/>
</dbReference>
<dbReference type="GO" id="GO:0051287">
    <property type="term" value="F:NAD binding"/>
    <property type="evidence" value="ECO:0007669"/>
    <property type="project" value="InterPro"/>
</dbReference>
<dbReference type="GO" id="GO:0008137">
    <property type="term" value="F:NADH dehydrogenase (ubiquinone) activity"/>
    <property type="evidence" value="ECO:0007669"/>
    <property type="project" value="InterPro"/>
</dbReference>
<dbReference type="GO" id="GO:0050136">
    <property type="term" value="F:NADH:ubiquinone reductase (non-electrogenic) activity"/>
    <property type="evidence" value="ECO:0007669"/>
    <property type="project" value="UniProtKB-UniRule"/>
</dbReference>
<dbReference type="GO" id="GO:0048038">
    <property type="term" value="F:quinone binding"/>
    <property type="evidence" value="ECO:0007669"/>
    <property type="project" value="UniProtKB-KW"/>
</dbReference>
<dbReference type="FunFam" id="1.10.645.10:FF:000001">
    <property type="entry name" value="NADH-quinone oxidoreductase subunit C/D"/>
    <property type="match status" value="1"/>
</dbReference>
<dbReference type="FunFam" id="3.30.460.80:FF:000001">
    <property type="entry name" value="NADH-quinone oxidoreductase subunit C/D"/>
    <property type="match status" value="1"/>
</dbReference>
<dbReference type="Gene3D" id="1.10.645.10">
    <property type="entry name" value="Cytochrome-c3 Hydrogenase, chain B"/>
    <property type="match status" value="1"/>
</dbReference>
<dbReference type="Gene3D" id="3.30.460.80">
    <property type="entry name" value="NADH:ubiquinone oxidoreductase, 30kDa subunit"/>
    <property type="match status" value="1"/>
</dbReference>
<dbReference type="HAMAP" id="MF_01357">
    <property type="entry name" value="NDH1_NuoC"/>
    <property type="match status" value="1"/>
</dbReference>
<dbReference type="HAMAP" id="MF_01359">
    <property type="entry name" value="NDH1_NuoCD_1"/>
    <property type="match status" value="1"/>
</dbReference>
<dbReference type="HAMAP" id="MF_01358">
    <property type="entry name" value="NDH1_NuoD"/>
    <property type="match status" value="1"/>
</dbReference>
<dbReference type="InterPro" id="IPR010218">
    <property type="entry name" value="NADH_DH_suC"/>
</dbReference>
<dbReference type="InterPro" id="IPR023062">
    <property type="entry name" value="NADH_DH_suCD"/>
</dbReference>
<dbReference type="InterPro" id="IPR001135">
    <property type="entry name" value="NADH_Q_OxRdtase_suD"/>
</dbReference>
<dbReference type="InterPro" id="IPR037232">
    <property type="entry name" value="NADH_quin_OxRdtase_su_C/D-like"/>
</dbReference>
<dbReference type="InterPro" id="IPR001268">
    <property type="entry name" value="NADH_UbQ_OxRdtase_30kDa_su"/>
</dbReference>
<dbReference type="InterPro" id="IPR014029">
    <property type="entry name" value="NADH_UbQ_OxRdtase_49kDa_CS"/>
</dbReference>
<dbReference type="InterPro" id="IPR022885">
    <property type="entry name" value="NDH1_su_D/H"/>
</dbReference>
<dbReference type="InterPro" id="IPR029014">
    <property type="entry name" value="NiFe-Hase_large"/>
</dbReference>
<dbReference type="NCBIfam" id="TIGR01961">
    <property type="entry name" value="NuoC_fam"/>
    <property type="match status" value="1"/>
</dbReference>
<dbReference type="NCBIfam" id="TIGR01962">
    <property type="entry name" value="NuoD"/>
    <property type="match status" value="1"/>
</dbReference>
<dbReference type="NCBIfam" id="NF004739">
    <property type="entry name" value="PRK06075.1"/>
    <property type="match status" value="1"/>
</dbReference>
<dbReference type="NCBIfam" id="NF008728">
    <property type="entry name" value="PRK11742.1"/>
    <property type="match status" value="1"/>
</dbReference>
<dbReference type="PANTHER" id="PTHR11993:SF45">
    <property type="entry name" value="NADH-QUINONE OXIDOREDUCTASE SUBUNIT C_D"/>
    <property type="match status" value="1"/>
</dbReference>
<dbReference type="PANTHER" id="PTHR11993">
    <property type="entry name" value="NADH-UBIQUINONE OXIDOREDUCTASE 49 KDA SUBUNIT"/>
    <property type="match status" value="1"/>
</dbReference>
<dbReference type="Pfam" id="PF00329">
    <property type="entry name" value="Complex1_30kDa"/>
    <property type="match status" value="1"/>
</dbReference>
<dbReference type="Pfam" id="PF00346">
    <property type="entry name" value="Complex1_49kDa"/>
    <property type="match status" value="1"/>
</dbReference>
<dbReference type="SUPFAM" id="SSF56762">
    <property type="entry name" value="HydB/Nqo4-like"/>
    <property type="match status" value="1"/>
</dbReference>
<dbReference type="SUPFAM" id="SSF143243">
    <property type="entry name" value="Nqo5-like"/>
    <property type="match status" value="1"/>
</dbReference>
<dbReference type="PROSITE" id="PS00535">
    <property type="entry name" value="COMPLEX1_49K"/>
    <property type="match status" value="1"/>
</dbReference>
<comment type="function">
    <text evidence="1">NDH-1 shuttles electrons from NADH, via FMN and iron-sulfur (Fe-S) centers, to quinones in the respiratory chain. The immediate electron acceptor for the enzyme in this species is believed to be ubiquinone. Couples the redox reaction to proton translocation (for every two electrons transferred, four hydrogen ions are translocated across the cytoplasmic membrane), and thus conserves the redox energy in a proton gradient.</text>
</comment>
<comment type="catalytic activity">
    <reaction evidence="1">
        <text>a quinone + NADH + 5 H(+)(in) = a quinol + NAD(+) + 4 H(+)(out)</text>
        <dbReference type="Rhea" id="RHEA:57888"/>
        <dbReference type="ChEBI" id="CHEBI:15378"/>
        <dbReference type="ChEBI" id="CHEBI:24646"/>
        <dbReference type="ChEBI" id="CHEBI:57540"/>
        <dbReference type="ChEBI" id="CHEBI:57945"/>
        <dbReference type="ChEBI" id="CHEBI:132124"/>
    </reaction>
</comment>
<comment type="subunit">
    <text evidence="1">NDH-1 is composed of 13 different subunits. Subunits NuoB, CD, E, F, and G constitute the peripheral sector of the complex.</text>
</comment>
<comment type="subcellular location">
    <subcellularLocation>
        <location evidence="1">Cell inner membrane</location>
        <topology evidence="1">Peripheral membrane protein</topology>
        <orientation evidence="1">Cytoplasmic side</orientation>
    </subcellularLocation>
</comment>
<comment type="similarity">
    <text evidence="1">In the N-terminal section; belongs to the complex I 30 kDa subunit family.</text>
</comment>
<comment type="similarity">
    <text evidence="1">In the C-terminal section; belongs to the complex I 49 kDa subunit family.</text>
</comment>
<gene>
    <name evidence="1" type="primary">nuoC</name>
    <name evidence="1" type="synonym">nuoCD</name>
    <name evidence="1" type="synonym">nuoD</name>
    <name type="ordered locus">YPTB2585</name>
</gene>
<organism>
    <name type="scientific">Yersinia pseudotuberculosis serotype I (strain IP32953)</name>
    <dbReference type="NCBI Taxonomy" id="273123"/>
    <lineage>
        <taxon>Bacteria</taxon>
        <taxon>Pseudomonadati</taxon>
        <taxon>Pseudomonadota</taxon>
        <taxon>Gammaproteobacteria</taxon>
        <taxon>Enterobacterales</taxon>
        <taxon>Yersiniaceae</taxon>
        <taxon>Yersinia</taxon>
    </lineage>
</organism>
<keyword id="KW-0997">Cell inner membrane</keyword>
<keyword id="KW-1003">Cell membrane</keyword>
<keyword id="KW-0472">Membrane</keyword>
<keyword id="KW-0511">Multifunctional enzyme</keyword>
<keyword id="KW-0520">NAD</keyword>
<keyword id="KW-0874">Quinone</keyword>
<keyword id="KW-1278">Translocase</keyword>
<keyword id="KW-0813">Transport</keyword>
<keyword id="KW-0830">Ubiquinone</keyword>
<evidence type="ECO:0000255" key="1">
    <source>
        <dbReference type="HAMAP-Rule" id="MF_01359"/>
    </source>
</evidence>
<name>NUOCD_YERPS</name>